<protein>
    <recommendedName>
        <fullName evidence="1">Iron-sulfur cluster insertion protein ErpA</fullName>
    </recommendedName>
</protein>
<comment type="function">
    <text evidence="1">Required for insertion of 4Fe-4S clusters for at least IspG.</text>
</comment>
<comment type="cofactor">
    <cofactor evidence="1">
        <name>iron-sulfur cluster</name>
        <dbReference type="ChEBI" id="CHEBI:30408"/>
    </cofactor>
    <text evidence="1">Binds 1 iron-sulfur cluster per subunit.</text>
</comment>
<comment type="subunit">
    <text evidence="1">Homodimer.</text>
</comment>
<comment type="similarity">
    <text evidence="1">Belongs to the HesB/IscA family.</text>
</comment>
<organism>
    <name type="scientific">Shewanella amazonensis (strain ATCC BAA-1098 / SB2B)</name>
    <dbReference type="NCBI Taxonomy" id="326297"/>
    <lineage>
        <taxon>Bacteria</taxon>
        <taxon>Pseudomonadati</taxon>
        <taxon>Pseudomonadota</taxon>
        <taxon>Gammaproteobacteria</taxon>
        <taxon>Alteromonadales</taxon>
        <taxon>Shewanellaceae</taxon>
        <taxon>Shewanella</taxon>
    </lineage>
</organism>
<keyword id="KW-0408">Iron</keyword>
<keyword id="KW-0411">Iron-sulfur</keyword>
<keyword id="KW-0479">Metal-binding</keyword>
<keyword id="KW-1185">Reference proteome</keyword>
<dbReference type="EMBL" id="CP000507">
    <property type="protein sequence ID" value="ABL99050.1"/>
    <property type="molecule type" value="Genomic_DNA"/>
</dbReference>
<dbReference type="RefSeq" id="WP_011758960.1">
    <property type="nucleotide sequence ID" value="NC_008700.1"/>
</dbReference>
<dbReference type="SMR" id="A1S3U4"/>
<dbReference type="STRING" id="326297.Sama_0843"/>
<dbReference type="KEGG" id="saz:Sama_0843"/>
<dbReference type="eggNOG" id="COG0316">
    <property type="taxonomic scope" value="Bacteria"/>
</dbReference>
<dbReference type="HOGENOM" id="CLU_069054_5_3_6"/>
<dbReference type="OrthoDB" id="9801228at2"/>
<dbReference type="Proteomes" id="UP000009175">
    <property type="component" value="Chromosome"/>
</dbReference>
<dbReference type="GO" id="GO:0005829">
    <property type="term" value="C:cytosol"/>
    <property type="evidence" value="ECO:0007669"/>
    <property type="project" value="TreeGrafter"/>
</dbReference>
<dbReference type="GO" id="GO:0051537">
    <property type="term" value="F:2 iron, 2 sulfur cluster binding"/>
    <property type="evidence" value="ECO:0007669"/>
    <property type="project" value="UniProtKB-ARBA"/>
</dbReference>
<dbReference type="GO" id="GO:0051539">
    <property type="term" value="F:4 iron, 4 sulfur cluster binding"/>
    <property type="evidence" value="ECO:0007669"/>
    <property type="project" value="TreeGrafter"/>
</dbReference>
<dbReference type="GO" id="GO:0005506">
    <property type="term" value="F:iron ion binding"/>
    <property type="evidence" value="ECO:0007669"/>
    <property type="project" value="UniProtKB-UniRule"/>
</dbReference>
<dbReference type="GO" id="GO:0016226">
    <property type="term" value="P:iron-sulfur cluster assembly"/>
    <property type="evidence" value="ECO:0007669"/>
    <property type="project" value="UniProtKB-UniRule"/>
</dbReference>
<dbReference type="FunFam" id="2.60.300.12:FF:000002">
    <property type="entry name" value="Iron-sulfur cluster insertion protein ErpA"/>
    <property type="match status" value="1"/>
</dbReference>
<dbReference type="Gene3D" id="2.60.300.12">
    <property type="entry name" value="HesB-like domain"/>
    <property type="match status" value="1"/>
</dbReference>
<dbReference type="HAMAP" id="MF_01380">
    <property type="entry name" value="Fe_S_insert_ErpA"/>
    <property type="match status" value="1"/>
</dbReference>
<dbReference type="InterPro" id="IPR000361">
    <property type="entry name" value="FeS_biogenesis"/>
</dbReference>
<dbReference type="InterPro" id="IPR016092">
    <property type="entry name" value="FeS_cluster_insertion"/>
</dbReference>
<dbReference type="InterPro" id="IPR017870">
    <property type="entry name" value="FeS_cluster_insertion_CS"/>
</dbReference>
<dbReference type="InterPro" id="IPR023063">
    <property type="entry name" value="FeS_cluster_insertion_RrpA"/>
</dbReference>
<dbReference type="InterPro" id="IPR035903">
    <property type="entry name" value="HesB-like_dom_sf"/>
</dbReference>
<dbReference type="NCBIfam" id="TIGR00049">
    <property type="entry name" value="iron-sulfur cluster assembly accessory protein"/>
    <property type="match status" value="1"/>
</dbReference>
<dbReference type="NCBIfam" id="NF010147">
    <property type="entry name" value="PRK13623.1"/>
    <property type="match status" value="1"/>
</dbReference>
<dbReference type="PANTHER" id="PTHR43011">
    <property type="entry name" value="IRON-SULFUR CLUSTER ASSEMBLY 2 HOMOLOG, MITOCHONDRIAL"/>
    <property type="match status" value="1"/>
</dbReference>
<dbReference type="PANTHER" id="PTHR43011:SF1">
    <property type="entry name" value="IRON-SULFUR CLUSTER ASSEMBLY 2 HOMOLOG, MITOCHONDRIAL"/>
    <property type="match status" value="1"/>
</dbReference>
<dbReference type="Pfam" id="PF01521">
    <property type="entry name" value="Fe-S_biosyn"/>
    <property type="match status" value="1"/>
</dbReference>
<dbReference type="SUPFAM" id="SSF89360">
    <property type="entry name" value="HesB-like domain"/>
    <property type="match status" value="1"/>
</dbReference>
<dbReference type="PROSITE" id="PS01152">
    <property type="entry name" value="HESB"/>
    <property type="match status" value="1"/>
</dbReference>
<gene>
    <name evidence="1" type="primary">erpA</name>
    <name type="ordered locus">Sama_0843</name>
</gene>
<evidence type="ECO:0000255" key="1">
    <source>
        <dbReference type="HAMAP-Rule" id="MF_01380"/>
    </source>
</evidence>
<sequence length="116" mass="12430">MTEQTDVAMPISFTDAAAAKVKALLDEEQNDALKLRVYVTGGGCSGFQYGFTFDEKVNDGDFTVEKQGVQLVVDPMSLQYLMGGEVDYTSGLEGSRFFVKNPNATTTCGCGASFSV</sequence>
<proteinExistence type="inferred from homology"/>
<feature type="chain" id="PRO_0000311547" description="Iron-sulfur cluster insertion protein ErpA">
    <location>
        <begin position="1"/>
        <end position="116"/>
    </location>
</feature>
<feature type="binding site" evidence="1">
    <location>
        <position position="44"/>
    </location>
    <ligand>
        <name>iron-sulfur cluster</name>
        <dbReference type="ChEBI" id="CHEBI:30408"/>
    </ligand>
</feature>
<feature type="binding site" evidence="1">
    <location>
        <position position="108"/>
    </location>
    <ligand>
        <name>iron-sulfur cluster</name>
        <dbReference type="ChEBI" id="CHEBI:30408"/>
    </ligand>
</feature>
<feature type="binding site" evidence="1">
    <location>
        <position position="110"/>
    </location>
    <ligand>
        <name>iron-sulfur cluster</name>
        <dbReference type="ChEBI" id="CHEBI:30408"/>
    </ligand>
</feature>
<accession>A1S3U4</accession>
<name>ERPA_SHEAM</name>
<reference key="1">
    <citation type="submission" date="2006-12" db="EMBL/GenBank/DDBJ databases">
        <title>Complete sequence of Shewanella amazonensis SB2B.</title>
        <authorList>
            <consortium name="US DOE Joint Genome Institute"/>
            <person name="Copeland A."/>
            <person name="Lucas S."/>
            <person name="Lapidus A."/>
            <person name="Barry K."/>
            <person name="Detter J.C."/>
            <person name="Glavina del Rio T."/>
            <person name="Hammon N."/>
            <person name="Israni S."/>
            <person name="Dalin E."/>
            <person name="Tice H."/>
            <person name="Pitluck S."/>
            <person name="Munk A.C."/>
            <person name="Brettin T."/>
            <person name="Bruce D."/>
            <person name="Han C."/>
            <person name="Tapia R."/>
            <person name="Gilna P."/>
            <person name="Schmutz J."/>
            <person name="Larimer F."/>
            <person name="Land M."/>
            <person name="Hauser L."/>
            <person name="Kyrpides N."/>
            <person name="Mikhailova N."/>
            <person name="Fredrickson J."/>
            <person name="Richardson P."/>
        </authorList>
    </citation>
    <scope>NUCLEOTIDE SEQUENCE [LARGE SCALE GENOMIC DNA]</scope>
    <source>
        <strain>ATCC BAA-1098 / SB2B</strain>
    </source>
</reference>